<name>HEMA_INBSD</name>
<organism>
    <name type="scientific">Influenza B virus (strain B/South Dakota/5/1989)</name>
    <dbReference type="NCBI Taxonomy" id="291805"/>
    <lineage>
        <taxon>Viruses</taxon>
        <taxon>Riboviria</taxon>
        <taxon>Orthornavirae</taxon>
        <taxon>Negarnaviricota</taxon>
        <taxon>Polyploviricotina</taxon>
        <taxon>Insthoviricetes</taxon>
        <taxon>Articulavirales</taxon>
        <taxon>Orthomyxoviridae</taxon>
        <taxon>Betainfluenzavirus</taxon>
        <taxon>Betainfluenzavirus influenzae</taxon>
        <taxon>Influenza B virus</taxon>
    </lineage>
</organism>
<evidence type="ECO:0000250" key="1"/>
<evidence type="ECO:0000255" key="2"/>
<evidence type="ECO:0000305" key="3"/>
<accession>Q67376</accession>
<gene>
    <name type="primary">HA</name>
</gene>
<reference key="1">
    <citation type="journal article" date="1992" name="J. Gen. Virol.">
        <title>Antigenic and genetic characterization of the haemagglutinins of recent cocirculating strains of influenza B virus.</title>
        <authorList>
            <person name="Rota P.A."/>
            <person name="Hemphill M."/>
            <person name="Whistler T."/>
            <person name="Regnery H.L."/>
            <person name="Kendal A.P."/>
        </authorList>
    </citation>
    <scope>NUCLEOTIDE SEQUENCE [GENOMIC RNA]</scope>
</reference>
<sequence>MKAIIVLLMVVTSNADRICTGITSSNSPHVVKTATQGEVNVTGVIPLTTTPTKSHFANLKGTKTRGKLCPNCLNCTDLDVALARPMCIGTIPSAKASILHEVRPVTSGCFPIMHDRTKIRQLPNLLRGYENIRLSTHNVINAERAPGGPYRLGTSGSCPNVTSRSGFFATMAWAVPRDNKTATNPLTVEVPYICTKGEDQITVWGFHSDSKTQMKKLYGDSNPQKFTSSANGVTTHYVSQIGGFPNQTEDGGLPQSGRIVVDYMVQKPGKTGTIVYQRGVLLPQKVWCASGRSKVIKGSLPLIGEADCLHEKYGGLNKSKPYYTGEHAKAIGNCPIWVKTPLKLANGTKYRPPAKLLKER</sequence>
<keyword id="KW-1015">Disulfide bond</keyword>
<keyword id="KW-1170">Fusion of virus membrane with host endosomal membrane</keyword>
<keyword id="KW-1168">Fusion of virus membrane with host membrane</keyword>
<keyword id="KW-0325">Glycoprotein</keyword>
<keyword id="KW-0348">Hemagglutinin</keyword>
<keyword id="KW-1032">Host cell membrane</keyword>
<keyword id="KW-1043">Host membrane</keyword>
<keyword id="KW-0945">Host-virus interaction</keyword>
<keyword id="KW-0449">Lipoprotein</keyword>
<keyword id="KW-0472">Membrane</keyword>
<keyword id="KW-0564">Palmitate</keyword>
<keyword id="KW-0732">Signal</keyword>
<keyword id="KW-0812">Transmembrane</keyword>
<keyword id="KW-1161">Viral attachment to host cell</keyword>
<keyword id="KW-0261">Viral envelope protein</keyword>
<keyword id="KW-1162">Viral penetration into host cytoplasm</keyword>
<keyword id="KW-0946">Virion</keyword>
<keyword id="KW-1160">Virus entry into host cell</keyword>
<protein>
    <recommendedName>
        <fullName>Hemagglutinin</fullName>
    </recommendedName>
    <component>
        <recommendedName>
            <fullName>Hemagglutinin HA1 chain</fullName>
        </recommendedName>
    </component>
</protein>
<comment type="function">
    <text>Binds to sialic acid-containing receptors on the cell surface, bringing about the attachment of the virus particle to the cell. Plays a major role in the determination of host range restriction and virulence. Class I viral fusion protein. Responsible for penetration of the virus into the cell cytoplasm by mediating the fusion of the membrane of the endocytosed virus particle with the endosomal membrane. Low pH in endosomes induce an irreversible conformational change in HA2, releasing the fusion hydrophobic peptide. Several trimers are required to form a competent fusion pore.</text>
</comment>
<comment type="subunit">
    <text>Homotrimer of disulfide-linked HA1-HA2.</text>
</comment>
<comment type="subcellular location">
    <subcellularLocation>
        <location evidence="3">Virion membrane</location>
        <topology evidence="3">Single-pass type I membrane protein</topology>
    </subcellularLocation>
    <subcellularLocation>
        <location>Host apical cell membrane</location>
        <topology>Single-pass type I membrane protein</topology>
    </subcellularLocation>
    <text>Targeted to the apical plasma membrane in epithelial polarized cells through a signal present in the transmembrane domain. Associated with glycosphingolipid- and cholesterol-enriched detergent-resistant lipid rafts.</text>
</comment>
<comment type="PTM">
    <text evidence="1">In natural infection, inactive HA is matured into HA1 and HA2 outside the cell by one or more trypsin-like, arginine-specific endoprotease secreted by the bronchial epithelial cells. One identified protease that may be involved in this process is secreted in lungs by club cells (By similarity).</text>
</comment>
<comment type="PTM">
    <text evidence="1">Palmitoylated.</text>
</comment>
<comment type="miscellaneous">
    <text>Major glycoprotein, comprises over 80% of the envelope proteins present in virus particle.</text>
</comment>
<comment type="miscellaneous">
    <text>The extent of infection into host organism is determined by HA. Influenza viruses bud from the apical surface of polarized epithelial cells (e.g. bronchial epithelial cells) into lumen of lungs and are therefore usually pneumotropic. The reason is that HA is cleaved by tryptase clara which is restricted to lungs. However, HAs of H5 and H7 pantropic avian viruses subtypes can be cleaved by furin and subtilisin-type enzymes, allowing the virus to grow in other organs than lungs.</text>
</comment>
<comment type="miscellaneous">
    <text>The influenza B genome consist of 8 RNA segments. Genetic variation of hemagglutinin and/or neuraminidase genes results in the emergence of new influenza strains. The mechanism of variation can be the result of point mutations or the result of genetic reassortment between segments of two different strains.</text>
</comment>
<comment type="similarity">
    <text evidence="3">Belongs to the influenza viruses hemagglutinin family.</text>
</comment>
<organismHost>
    <name type="scientific">Homo sapiens</name>
    <name type="common">Human</name>
    <dbReference type="NCBI Taxonomy" id="9606"/>
</organismHost>
<proteinExistence type="inferred from homology"/>
<feature type="signal peptide" evidence="2">
    <location>
        <begin position="1"/>
        <end position="15"/>
    </location>
</feature>
<feature type="chain" id="PRO_0000039126" description="Hemagglutinin HA1 chain" evidence="1">
    <location>
        <begin position="16"/>
        <end position="360"/>
    </location>
</feature>
<feature type="glycosylation site" description="N-linked (GlcNAc...) asparagine; by host" evidence="2">
    <location>
        <position position="40"/>
    </location>
</feature>
<feature type="glycosylation site" description="N-linked (GlcNAc...) asparagine; by host" evidence="2">
    <location>
        <position position="74"/>
    </location>
</feature>
<feature type="glycosylation site" description="N-linked (GlcNAc...) asparagine; by host" evidence="2">
    <location>
        <position position="160"/>
    </location>
</feature>
<feature type="glycosylation site" description="N-linked (GlcNAc...) asparagine; by host" evidence="2">
    <location>
        <position position="179"/>
    </location>
</feature>
<feature type="glycosylation site" description="N-linked (GlcNAc...) asparagine; by host" evidence="2">
    <location>
        <position position="246"/>
    </location>
</feature>
<feature type="glycosylation site" description="N-linked (GlcNAc...) asparagine; by host" evidence="2">
    <location>
        <position position="317"/>
    </location>
</feature>
<feature type="glycosylation site" description="N-linked (GlcNAc...) asparagine; by host" evidence="2">
    <location>
        <position position="346"/>
    </location>
</feature>
<feature type="non-terminal residue">
    <location>
        <position position="360"/>
    </location>
</feature>
<dbReference type="EMBL" id="M65172">
    <property type="protein sequence ID" value="AAA43710.1"/>
    <property type="molecule type" value="Genomic_RNA"/>
</dbReference>
<dbReference type="PIR" id="JQ1911">
    <property type="entry name" value="JQ1911"/>
</dbReference>
<dbReference type="SMR" id="Q67376"/>
<dbReference type="GlyCosmos" id="Q67376">
    <property type="glycosylation" value="7 sites, No reported glycans"/>
</dbReference>
<dbReference type="GO" id="GO:0020002">
    <property type="term" value="C:host cell plasma membrane"/>
    <property type="evidence" value="ECO:0007669"/>
    <property type="project" value="UniProtKB-SubCell"/>
</dbReference>
<dbReference type="GO" id="GO:0016020">
    <property type="term" value="C:membrane"/>
    <property type="evidence" value="ECO:0007669"/>
    <property type="project" value="UniProtKB-KW"/>
</dbReference>
<dbReference type="GO" id="GO:0019031">
    <property type="term" value="C:viral envelope"/>
    <property type="evidence" value="ECO:0007669"/>
    <property type="project" value="UniProtKB-KW"/>
</dbReference>
<dbReference type="GO" id="GO:0055036">
    <property type="term" value="C:virion membrane"/>
    <property type="evidence" value="ECO:0007669"/>
    <property type="project" value="UniProtKB-SubCell"/>
</dbReference>
<dbReference type="GO" id="GO:0046789">
    <property type="term" value="F:host cell surface receptor binding"/>
    <property type="evidence" value="ECO:0007669"/>
    <property type="project" value="InterPro"/>
</dbReference>
<dbReference type="GO" id="GO:0039654">
    <property type="term" value="P:fusion of virus membrane with host endosome membrane"/>
    <property type="evidence" value="ECO:0007669"/>
    <property type="project" value="UniProtKB-KW"/>
</dbReference>
<dbReference type="GO" id="GO:0019064">
    <property type="term" value="P:fusion of virus membrane with host plasma membrane"/>
    <property type="evidence" value="ECO:0007669"/>
    <property type="project" value="InterPro"/>
</dbReference>
<dbReference type="GO" id="GO:0046718">
    <property type="term" value="P:symbiont entry into host cell"/>
    <property type="evidence" value="ECO:0007669"/>
    <property type="project" value="UniProtKB-KW"/>
</dbReference>
<dbReference type="GO" id="GO:0019062">
    <property type="term" value="P:virion attachment to host cell"/>
    <property type="evidence" value="ECO:0007669"/>
    <property type="project" value="UniProtKB-KW"/>
</dbReference>
<dbReference type="Gene3D" id="3.90.209.20">
    <property type="match status" value="1"/>
</dbReference>
<dbReference type="Gene3D" id="2.10.77.10">
    <property type="entry name" value="Hemagglutinin Chain A, Domain 2"/>
    <property type="match status" value="1"/>
</dbReference>
<dbReference type="InterPro" id="IPR008980">
    <property type="entry name" value="Capsid_hemagglutn"/>
</dbReference>
<dbReference type="InterPro" id="IPR013828">
    <property type="entry name" value="Hemagglutn_HA1_a/b_dom_sf"/>
</dbReference>
<dbReference type="InterPro" id="IPR001364">
    <property type="entry name" value="Hemagglutn_influenz_A/B"/>
</dbReference>
<dbReference type="Pfam" id="PF00509">
    <property type="entry name" value="Hemagglutinin"/>
    <property type="match status" value="1"/>
</dbReference>
<dbReference type="SUPFAM" id="SSF49818">
    <property type="entry name" value="Viral protein domain"/>
    <property type="match status" value="1"/>
</dbReference>